<comment type="function">
    <text evidence="1">Catalyzes the condensation of (S)-aspartate-beta-semialdehyde [(S)-ASA] and pyruvate to 4-hydroxy-tetrahydrodipicolinate (HTPA).</text>
</comment>
<comment type="catalytic activity">
    <reaction evidence="1">
        <text>L-aspartate 4-semialdehyde + pyruvate = (2S,4S)-4-hydroxy-2,3,4,5-tetrahydrodipicolinate + H2O + H(+)</text>
        <dbReference type="Rhea" id="RHEA:34171"/>
        <dbReference type="ChEBI" id="CHEBI:15361"/>
        <dbReference type="ChEBI" id="CHEBI:15377"/>
        <dbReference type="ChEBI" id="CHEBI:15378"/>
        <dbReference type="ChEBI" id="CHEBI:67139"/>
        <dbReference type="ChEBI" id="CHEBI:537519"/>
        <dbReference type="EC" id="4.3.3.7"/>
    </reaction>
</comment>
<comment type="pathway">
    <text evidence="1">Amino-acid biosynthesis; L-lysine biosynthesis via DAP pathway; (S)-tetrahydrodipicolinate from L-aspartate: step 3/4.</text>
</comment>
<comment type="subunit">
    <text evidence="1">Homotetramer; dimer of dimers.</text>
</comment>
<comment type="subcellular location">
    <subcellularLocation>
        <location evidence="1">Cytoplasm</location>
    </subcellularLocation>
</comment>
<comment type="similarity">
    <text evidence="1">Belongs to the DapA family.</text>
</comment>
<comment type="caution">
    <text evidence="2">Was originally thought to be a dihydrodipicolinate synthase (DHDPS), catalyzing the condensation of (S)-aspartate-beta-semialdehyde [(S)-ASA] and pyruvate to dihydrodipicolinate (DHDP). However, it was shown in E.coli that the product of the enzymatic reaction is not dihydrodipicolinate but in fact (4S)-4-hydroxy-2,3,4,5-tetrahydro-(2S)-dipicolinic acid (HTPA), and that the consecutive dehydration reaction leading to DHDP is not spontaneous but catalyzed by DapB.</text>
</comment>
<keyword id="KW-0028">Amino-acid biosynthesis</keyword>
<keyword id="KW-0963">Cytoplasm</keyword>
<keyword id="KW-0220">Diaminopimelate biosynthesis</keyword>
<keyword id="KW-0456">Lyase</keyword>
<keyword id="KW-0457">Lysine biosynthesis</keyword>
<keyword id="KW-1185">Reference proteome</keyword>
<keyword id="KW-0704">Schiff base</keyword>
<accession>Q5LMK7</accession>
<gene>
    <name evidence="1" type="primary">dapA</name>
    <name type="ordered locus">SPO3556</name>
</gene>
<protein>
    <recommendedName>
        <fullName evidence="1">4-hydroxy-tetrahydrodipicolinate synthase</fullName>
        <shortName evidence="1">HTPA synthase</shortName>
        <ecNumber evidence="1">4.3.3.7</ecNumber>
    </recommendedName>
</protein>
<sequence length="290" mass="30493">MFKGSMPALVTPFRNGELDLEALKRLVEWQIGEGSTGLVPVGTTGESPTLSHEEHETVVAEVVKAAAGRVPVIAGAGSNNTTEAIRFVQFAQRIGADAALVVTPYYNRPTQRGLIAHFTALHDCAEIPIVIYNIPGRSVVDMTPATMGALAKLPRIVGVKDATGDLARVSQQRASCGADFIQLSGEDATALGFNAHGGVGCISVTANVAPRLCAEFQQATLAGDYAKALDYQDRLMPLHEAIFIEPGLVGAKYALSKLGLCSEEVRSPLTGLEDSTKAAIDAAMKHAGLL</sequence>
<reference key="1">
    <citation type="journal article" date="2004" name="Nature">
        <title>Genome sequence of Silicibacter pomeroyi reveals adaptations to the marine environment.</title>
        <authorList>
            <person name="Moran M.A."/>
            <person name="Buchan A."/>
            <person name="Gonzalez J.M."/>
            <person name="Heidelberg J.F."/>
            <person name="Whitman W.B."/>
            <person name="Kiene R.P."/>
            <person name="Henriksen J.R."/>
            <person name="King G.M."/>
            <person name="Belas R."/>
            <person name="Fuqua C."/>
            <person name="Brinkac L.M."/>
            <person name="Lewis M."/>
            <person name="Johri S."/>
            <person name="Weaver B."/>
            <person name="Pai G."/>
            <person name="Eisen J.A."/>
            <person name="Rahe E."/>
            <person name="Sheldon W.M."/>
            <person name="Ye W."/>
            <person name="Miller T.R."/>
            <person name="Carlton J."/>
            <person name="Rasko D.A."/>
            <person name="Paulsen I.T."/>
            <person name="Ren Q."/>
            <person name="Daugherty S.C."/>
            <person name="DeBoy R.T."/>
            <person name="Dodson R.J."/>
            <person name="Durkin A.S."/>
            <person name="Madupu R."/>
            <person name="Nelson W.C."/>
            <person name="Sullivan S.A."/>
            <person name="Rosovitz M.J."/>
            <person name="Haft D.H."/>
            <person name="Selengut J."/>
            <person name="Ward N."/>
        </authorList>
    </citation>
    <scope>NUCLEOTIDE SEQUENCE [LARGE SCALE GENOMIC DNA]</scope>
    <source>
        <strain>ATCC 700808 / DSM 15171 / DSS-3</strain>
    </source>
</reference>
<reference key="2">
    <citation type="journal article" date="2014" name="Stand. Genomic Sci.">
        <title>An updated genome annotation for the model marine bacterium Ruegeria pomeroyi DSS-3.</title>
        <authorList>
            <person name="Rivers A.R."/>
            <person name="Smith C.B."/>
            <person name="Moran M.A."/>
        </authorList>
    </citation>
    <scope>GENOME REANNOTATION</scope>
    <source>
        <strain>ATCC 700808 / DSM 15171 / DSS-3</strain>
    </source>
</reference>
<organism>
    <name type="scientific">Ruegeria pomeroyi (strain ATCC 700808 / DSM 15171 / DSS-3)</name>
    <name type="common">Silicibacter pomeroyi</name>
    <dbReference type="NCBI Taxonomy" id="246200"/>
    <lineage>
        <taxon>Bacteria</taxon>
        <taxon>Pseudomonadati</taxon>
        <taxon>Pseudomonadota</taxon>
        <taxon>Alphaproteobacteria</taxon>
        <taxon>Rhodobacterales</taxon>
        <taxon>Roseobacteraceae</taxon>
        <taxon>Ruegeria</taxon>
    </lineage>
</organism>
<name>DAPA_RUEPO</name>
<proteinExistence type="inferred from homology"/>
<feature type="chain" id="PRO_0000103153" description="4-hydroxy-tetrahydrodipicolinate synthase">
    <location>
        <begin position="1"/>
        <end position="290"/>
    </location>
</feature>
<feature type="active site" description="Proton donor/acceptor" evidence="1">
    <location>
        <position position="132"/>
    </location>
</feature>
<feature type="active site" description="Schiff-base intermediate with substrate" evidence="1">
    <location>
        <position position="160"/>
    </location>
</feature>
<feature type="binding site" evidence="1">
    <location>
        <position position="44"/>
    </location>
    <ligand>
        <name>pyruvate</name>
        <dbReference type="ChEBI" id="CHEBI:15361"/>
    </ligand>
</feature>
<feature type="binding site" evidence="1">
    <location>
        <position position="202"/>
    </location>
    <ligand>
        <name>pyruvate</name>
        <dbReference type="ChEBI" id="CHEBI:15361"/>
    </ligand>
</feature>
<feature type="site" description="Part of a proton relay during catalysis" evidence="1">
    <location>
        <position position="43"/>
    </location>
</feature>
<feature type="site" description="Part of a proton relay during catalysis" evidence="1">
    <location>
        <position position="106"/>
    </location>
</feature>
<evidence type="ECO:0000255" key="1">
    <source>
        <dbReference type="HAMAP-Rule" id="MF_00418"/>
    </source>
</evidence>
<evidence type="ECO:0000305" key="2"/>
<dbReference type="EC" id="4.3.3.7" evidence="1"/>
<dbReference type="EMBL" id="CP000031">
    <property type="protein sequence ID" value="AAV96781.1"/>
    <property type="molecule type" value="Genomic_DNA"/>
</dbReference>
<dbReference type="RefSeq" id="WP_011049236.1">
    <property type="nucleotide sequence ID" value="NC_003911.12"/>
</dbReference>
<dbReference type="SMR" id="Q5LMK7"/>
<dbReference type="STRING" id="246200.SPO3556"/>
<dbReference type="PaxDb" id="246200-SPO3556"/>
<dbReference type="KEGG" id="sil:SPO3556"/>
<dbReference type="eggNOG" id="COG0329">
    <property type="taxonomic scope" value="Bacteria"/>
</dbReference>
<dbReference type="HOGENOM" id="CLU_049343_7_0_5"/>
<dbReference type="OrthoDB" id="9782828at2"/>
<dbReference type="UniPathway" id="UPA00034">
    <property type="reaction ID" value="UER00017"/>
</dbReference>
<dbReference type="Proteomes" id="UP000001023">
    <property type="component" value="Chromosome"/>
</dbReference>
<dbReference type="GO" id="GO:0005829">
    <property type="term" value="C:cytosol"/>
    <property type="evidence" value="ECO:0007669"/>
    <property type="project" value="TreeGrafter"/>
</dbReference>
<dbReference type="GO" id="GO:0008840">
    <property type="term" value="F:4-hydroxy-tetrahydrodipicolinate synthase activity"/>
    <property type="evidence" value="ECO:0007669"/>
    <property type="project" value="UniProtKB-UniRule"/>
</dbReference>
<dbReference type="GO" id="GO:0019877">
    <property type="term" value="P:diaminopimelate biosynthetic process"/>
    <property type="evidence" value="ECO:0007669"/>
    <property type="project" value="UniProtKB-UniRule"/>
</dbReference>
<dbReference type="GO" id="GO:0009089">
    <property type="term" value="P:lysine biosynthetic process via diaminopimelate"/>
    <property type="evidence" value="ECO:0007669"/>
    <property type="project" value="UniProtKB-UniRule"/>
</dbReference>
<dbReference type="CDD" id="cd00950">
    <property type="entry name" value="DHDPS"/>
    <property type="match status" value="1"/>
</dbReference>
<dbReference type="Gene3D" id="3.20.20.70">
    <property type="entry name" value="Aldolase class I"/>
    <property type="match status" value="1"/>
</dbReference>
<dbReference type="HAMAP" id="MF_00418">
    <property type="entry name" value="DapA"/>
    <property type="match status" value="1"/>
</dbReference>
<dbReference type="InterPro" id="IPR013785">
    <property type="entry name" value="Aldolase_TIM"/>
</dbReference>
<dbReference type="InterPro" id="IPR005263">
    <property type="entry name" value="DapA"/>
</dbReference>
<dbReference type="InterPro" id="IPR002220">
    <property type="entry name" value="DapA-like"/>
</dbReference>
<dbReference type="InterPro" id="IPR020625">
    <property type="entry name" value="Schiff_base-form_aldolases_AS"/>
</dbReference>
<dbReference type="InterPro" id="IPR020624">
    <property type="entry name" value="Schiff_base-form_aldolases_CS"/>
</dbReference>
<dbReference type="NCBIfam" id="TIGR00674">
    <property type="entry name" value="dapA"/>
    <property type="match status" value="1"/>
</dbReference>
<dbReference type="PANTHER" id="PTHR12128:SF66">
    <property type="entry name" value="4-HYDROXY-2-OXOGLUTARATE ALDOLASE, MITOCHONDRIAL"/>
    <property type="match status" value="1"/>
</dbReference>
<dbReference type="PANTHER" id="PTHR12128">
    <property type="entry name" value="DIHYDRODIPICOLINATE SYNTHASE"/>
    <property type="match status" value="1"/>
</dbReference>
<dbReference type="Pfam" id="PF00701">
    <property type="entry name" value="DHDPS"/>
    <property type="match status" value="1"/>
</dbReference>
<dbReference type="PIRSF" id="PIRSF001365">
    <property type="entry name" value="DHDPS"/>
    <property type="match status" value="1"/>
</dbReference>
<dbReference type="PRINTS" id="PR00146">
    <property type="entry name" value="DHPICSNTHASE"/>
</dbReference>
<dbReference type="SMART" id="SM01130">
    <property type="entry name" value="DHDPS"/>
    <property type="match status" value="1"/>
</dbReference>
<dbReference type="SUPFAM" id="SSF51569">
    <property type="entry name" value="Aldolase"/>
    <property type="match status" value="1"/>
</dbReference>
<dbReference type="PROSITE" id="PS00665">
    <property type="entry name" value="DHDPS_1"/>
    <property type="match status" value="1"/>
</dbReference>
<dbReference type="PROSITE" id="PS00666">
    <property type="entry name" value="DHDPS_2"/>
    <property type="match status" value="1"/>
</dbReference>